<dbReference type="EMBL" id="AAFI02000172">
    <property type="protein sequence ID" value="EAL61988.2"/>
    <property type="molecule type" value="Genomic_DNA"/>
</dbReference>
<dbReference type="RefSeq" id="XP_635470.2">
    <property type="nucleotide sequence ID" value="XM_630378.2"/>
</dbReference>
<dbReference type="FunCoup" id="Q54FF2">
    <property type="interactions" value="640"/>
</dbReference>
<dbReference type="PaxDb" id="44689-DDB0266562"/>
<dbReference type="EnsemblProtists" id="EAL61988">
    <property type="protein sequence ID" value="EAL61988"/>
    <property type="gene ID" value="DDB_G0290945"/>
</dbReference>
<dbReference type="GeneID" id="8627886"/>
<dbReference type="KEGG" id="ddi:DDB_G0290945"/>
<dbReference type="dictyBase" id="DDB_G0290945"/>
<dbReference type="VEuPathDB" id="AmoebaDB:DDB_G0290945"/>
<dbReference type="HOGENOM" id="CLU_194865_0_0_1"/>
<dbReference type="InParanoid" id="Q54FF2"/>
<dbReference type="PhylomeDB" id="Q54FF2"/>
<dbReference type="PRO" id="PR:Q54FF2"/>
<dbReference type="Proteomes" id="UP000002195">
    <property type="component" value="Chromosome 5"/>
</dbReference>
<feature type="chain" id="PRO_0000317359" description="UPF0512 protein U">
    <location>
        <begin position="1"/>
        <end position="85"/>
    </location>
</feature>
<gene>
    <name type="ORF">DDB_G0290945</name>
</gene>
<name>U512U_DICDI</name>
<proteinExistence type="inferred from homology"/>
<comment type="similarity">
    <text evidence="1">Belongs to the UPF0512 family.</text>
</comment>
<keyword id="KW-1185">Reference proteome</keyword>
<evidence type="ECO:0000305" key="1"/>
<protein>
    <recommendedName>
        <fullName>UPF0512 protein U</fullName>
    </recommendedName>
</protein>
<organism>
    <name type="scientific">Dictyostelium discoideum</name>
    <name type="common">Social amoeba</name>
    <dbReference type="NCBI Taxonomy" id="44689"/>
    <lineage>
        <taxon>Eukaryota</taxon>
        <taxon>Amoebozoa</taxon>
        <taxon>Evosea</taxon>
        <taxon>Eumycetozoa</taxon>
        <taxon>Dictyostelia</taxon>
        <taxon>Dictyosteliales</taxon>
        <taxon>Dictyosteliaceae</taxon>
        <taxon>Dictyostelium</taxon>
    </lineage>
</organism>
<reference key="1">
    <citation type="journal article" date="2005" name="Nature">
        <title>The genome of the social amoeba Dictyostelium discoideum.</title>
        <authorList>
            <person name="Eichinger L."/>
            <person name="Pachebat J.A."/>
            <person name="Gloeckner G."/>
            <person name="Rajandream M.A."/>
            <person name="Sucgang R."/>
            <person name="Berriman M."/>
            <person name="Song J."/>
            <person name="Olsen R."/>
            <person name="Szafranski K."/>
            <person name="Xu Q."/>
            <person name="Tunggal B."/>
            <person name="Kummerfeld S."/>
            <person name="Madera M."/>
            <person name="Konfortov B.A."/>
            <person name="Rivero F."/>
            <person name="Bankier A.T."/>
            <person name="Lehmann R."/>
            <person name="Hamlin N."/>
            <person name="Davies R."/>
            <person name="Gaudet P."/>
            <person name="Fey P."/>
            <person name="Pilcher K."/>
            <person name="Chen G."/>
            <person name="Saunders D."/>
            <person name="Sodergren E.J."/>
            <person name="Davis P."/>
            <person name="Kerhornou A."/>
            <person name="Nie X."/>
            <person name="Hall N."/>
            <person name="Anjard C."/>
            <person name="Hemphill L."/>
            <person name="Bason N."/>
            <person name="Farbrother P."/>
            <person name="Desany B."/>
            <person name="Just E."/>
            <person name="Morio T."/>
            <person name="Rost R."/>
            <person name="Churcher C.M."/>
            <person name="Cooper J."/>
            <person name="Haydock S."/>
            <person name="van Driessche N."/>
            <person name="Cronin A."/>
            <person name="Goodhead I."/>
            <person name="Muzny D.M."/>
            <person name="Mourier T."/>
            <person name="Pain A."/>
            <person name="Lu M."/>
            <person name="Harper D."/>
            <person name="Lindsay R."/>
            <person name="Hauser H."/>
            <person name="James K.D."/>
            <person name="Quiles M."/>
            <person name="Madan Babu M."/>
            <person name="Saito T."/>
            <person name="Buchrieser C."/>
            <person name="Wardroper A."/>
            <person name="Felder M."/>
            <person name="Thangavelu M."/>
            <person name="Johnson D."/>
            <person name="Knights A."/>
            <person name="Loulseged H."/>
            <person name="Mungall K.L."/>
            <person name="Oliver K."/>
            <person name="Price C."/>
            <person name="Quail M.A."/>
            <person name="Urushihara H."/>
            <person name="Hernandez J."/>
            <person name="Rabbinowitsch E."/>
            <person name="Steffen D."/>
            <person name="Sanders M."/>
            <person name="Ma J."/>
            <person name="Kohara Y."/>
            <person name="Sharp S."/>
            <person name="Simmonds M.N."/>
            <person name="Spiegler S."/>
            <person name="Tivey A."/>
            <person name="Sugano S."/>
            <person name="White B."/>
            <person name="Walker D."/>
            <person name="Woodward J.R."/>
            <person name="Winckler T."/>
            <person name="Tanaka Y."/>
            <person name="Shaulsky G."/>
            <person name="Schleicher M."/>
            <person name="Weinstock G.M."/>
            <person name="Rosenthal A."/>
            <person name="Cox E.C."/>
            <person name="Chisholm R.L."/>
            <person name="Gibbs R.A."/>
            <person name="Loomis W.F."/>
            <person name="Platzer M."/>
            <person name="Kay R.R."/>
            <person name="Williams J.G."/>
            <person name="Dear P.H."/>
            <person name="Noegel A.A."/>
            <person name="Barrell B.G."/>
            <person name="Kuspa A."/>
        </authorList>
    </citation>
    <scope>NUCLEOTIDE SEQUENCE [LARGE SCALE GENOMIC DNA]</scope>
    <source>
        <strain>AX4</strain>
    </source>
</reference>
<accession>Q54FF2</accession>
<sequence length="85" mass="8539">MAIFKSISSISNPTGSMGSSIGTSNIDGLTNNNNSIACFDSDYSGLNGLGGLGGFNGGGCGGCGDSNTNIINIDIDLCRRGHRCC</sequence>